<gene>
    <name evidence="1" type="primary">yceI</name>
    <name type="ordered locus">SSPA1575</name>
</gene>
<proteinExistence type="inferred from homology"/>
<comment type="subcellular location">
    <subcellularLocation>
        <location evidence="1">Periplasm</location>
    </subcellularLocation>
</comment>
<comment type="similarity">
    <text evidence="1">Belongs to the UPF0312 family. Type 1 subfamily.</text>
</comment>
<dbReference type="EMBL" id="FM200053">
    <property type="protein sequence ID" value="CAR59761.1"/>
    <property type="molecule type" value="Genomic_DNA"/>
</dbReference>
<dbReference type="RefSeq" id="WP_000739886.1">
    <property type="nucleotide sequence ID" value="NC_011147.1"/>
</dbReference>
<dbReference type="SMR" id="B5BBD2"/>
<dbReference type="KEGG" id="sek:SSPA1575"/>
<dbReference type="HOGENOM" id="CLU_071003_1_2_6"/>
<dbReference type="Proteomes" id="UP000001869">
    <property type="component" value="Chromosome"/>
</dbReference>
<dbReference type="GO" id="GO:0042597">
    <property type="term" value="C:periplasmic space"/>
    <property type="evidence" value="ECO:0007669"/>
    <property type="project" value="UniProtKB-SubCell"/>
</dbReference>
<dbReference type="Gene3D" id="2.40.128.110">
    <property type="entry name" value="Lipid/polyisoprenoid-binding, YceI-like"/>
    <property type="match status" value="1"/>
</dbReference>
<dbReference type="HAMAP" id="MF_00780">
    <property type="entry name" value="UPF0312"/>
    <property type="match status" value="1"/>
</dbReference>
<dbReference type="InterPro" id="IPR007372">
    <property type="entry name" value="Lipid/polyisoprenoid-bd_YceI"/>
</dbReference>
<dbReference type="InterPro" id="IPR036761">
    <property type="entry name" value="TTHA0802/YceI-like_sf"/>
</dbReference>
<dbReference type="InterPro" id="IPR023480">
    <property type="entry name" value="UPF0312/YceI"/>
</dbReference>
<dbReference type="NCBIfam" id="NF002994">
    <property type="entry name" value="PRK03757.1"/>
    <property type="match status" value="1"/>
</dbReference>
<dbReference type="PANTHER" id="PTHR34406">
    <property type="entry name" value="PROTEIN YCEI"/>
    <property type="match status" value="1"/>
</dbReference>
<dbReference type="PANTHER" id="PTHR34406:SF1">
    <property type="entry name" value="PROTEIN YCEI"/>
    <property type="match status" value="1"/>
</dbReference>
<dbReference type="Pfam" id="PF04264">
    <property type="entry name" value="YceI"/>
    <property type="match status" value="1"/>
</dbReference>
<dbReference type="SMART" id="SM00867">
    <property type="entry name" value="YceI"/>
    <property type="match status" value="1"/>
</dbReference>
<dbReference type="SUPFAM" id="SSF101874">
    <property type="entry name" value="YceI-like"/>
    <property type="match status" value="1"/>
</dbReference>
<reference key="1">
    <citation type="journal article" date="2009" name="BMC Genomics">
        <title>Pseudogene accumulation in the evolutionary histories of Salmonella enterica serovars Paratyphi A and Typhi.</title>
        <authorList>
            <person name="Holt K.E."/>
            <person name="Thomson N.R."/>
            <person name="Wain J."/>
            <person name="Langridge G.C."/>
            <person name="Hasan R."/>
            <person name="Bhutta Z.A."/>
            <person name="Quail M.A."/>
            <person name="Norbertczak H."/>
            <person name="Walker D."/>
            <person name="Simmonds M."/>
            <person name="White B."/>
            <person name="Bason N."/>
            <person name="Mungall K."/>
            <person name="Dougan G."/>
            <person name="Parkhill J."/>
        </authorList>
    </citation>
    <scope>NUCLEOTIDE SEQUENCE [LARGE SCALE GENOMIC DNA]</scope>
    <source>
        <strain>AKU_12601</strain>
    </source>
</reference>
<sequence>MKKNLLGFTLASLLFTTGSAVAAEYKIDKEGQHAFVNFRIQHLGYSWLYGTFKDFDGTFTFDEKNPSADKVNVTINTNSVDTNHAERDKHLRSAEFLNVAKFPQATFTSTSVKKEGDELDITGNLTLNGVTKPVTLEAKLMGQGDDPWGGKRAGFEAEGKIKLKDFNITTDLGPASQEVELIISVEGVQQK</sequence>
<accession>B5BBD2</accession>
<protein>
    <recommendedName>
        <fullName evidence="1">Protein YceI</fullName>
    </recommendedName>
</protein>
<organism>
    <name type="scientific">Salmonella paratyphi A (strain AKU_12601)</name>
    <dbReference type="NCBI Taxonomy" id="554290"/>
    <lineage>
        <taxon>Bacteria</taxon>
        <taxon>Pseudomonadati</taxon>
        <taxon>Pseudomonadota</taxon>
        <taxon>Gammaproteobacteria</taxon>
        <taxon>Enterobacterales</taxon>
        <taxon>Enterobacteriaceae</taxon>
        <taxon>Salmonella</taxon>
    </lineage>
</organism>
<keyword id="KW-0574">Periplasm</keyword>
<keyword id="KW-0732">Signal</keyword>
<feature type="signal peptide" evidence="1">
    <location>
        <begin position="1"/>
        <end position="22"/>
    </location>
</feature>
<feature type="chain" id="PRO_1000200480" description="Protein YceI">
    <location>
        <begin position="23"/>
        <end position="191"/>
    </location>
</feature>
<name>YCEI_SALPK</name>
<evidence type="ECO:0000255" key="1">
    <source>
        <dbReference type="HAMAP-Rule" id="MF_00780"/>
    </source>
</evidence>